<name>OBG_DESHD</name>
<keyword id="KW-0963">Cytoplasm</keyword>
<keyword id="KW-0342">GTP-binding</keyword>
<keyword id="KW-0378">Hydrolase</keyword>
<keyword id="KW-0460">Magnesium</keyword>
<keyword id="KW-0479">Metal-binding</keyword>
<keyword id="KW-0547">Nucleotide-binding</keyword>
<organism>
    <name type="scientific">Desulfitobacterium hafniense (strain DSM 10664 / DCB-2)</name>
    <dbReference type="NCBI Taxonomy" id="272564"/>
    <lineage>
        <taxon>Bacteria</taxon>
        <taxon>Bacillati</taxon>
        <taxon>Bacillota</taxon>
        <taxon>Clostridia</taxon>
        <taxon>Eubacteriales</taxon>
        <taxon>Desulfitobacteriaceae</taxon>
        <taxon>Desulfitobacterium</taxon>
    </lineage>
</organism>
<evidence type="ECO:0000255" key="1">
    <source>
        <dbReference type="HAMAP-Rule" id="MF_01454"/>
    </source>
</evidence>
<evidence type="ECO:0000255" key="2">
    <source>
        <dbReference type="PROSITE-ProRule" id="PRU01229"/>
    </source>
</evidence>
<evidence type="ECO:0000255" key="3">
    <source>
        <dbReference type="PROSITE-ProRule" id="PRU01231"/>
    </source>
</evidence>
<reference key="1">
    <citation type="journal article" date="2012" name="BMC Microbiol.">
        <title>Genome sequence of Desulfitobacterium hafniense DCB-2, a Gram-positive anaerobe capable of dehalogenation and metal reduction.</title>
        <authorList>
            <person name="Kim S.H."/>
            <person name="Harzman C."/>
            <person name="Davis J.K."/>
            <person name="Hutcheson R."/>
            <person name="Broderick J.B."/>
            <person name="Marsh T.L."/>
            <person name="Tiedje J.M."/>
        </authorList>
    </citation>
    <scope>NUCLEOTIDE SEQUENCE [LARGE SCALE GENOMIC DNA]</scope>
    <source>
        <strain>DSM 10664 / DCB-2</strain>
    </source>
</reference>
<gene>
    <name evidence="1" type="primary">obg</name>
    <name type="ordered locus">Dhaf_4334</name>
</gene>
<dbReference type="EC" id="3.6.5.-" evidence="1"/>
<dbReference type="EMBL" id="CP001336">
    <property type="protein sequence ID" value="ACL22339.1"/>
    <property type="molecule type" value="Genomic_DNA"/>
</dbReference>
<dbReference type="SMR" id="B8FUR9"/>
<dbReference type="KEGG" id="dhd:Dhaf_4334"/>
<dbReference type="HOGENOM" id="CLU_011747_2_1_9"/>
<dbReference type="Proteomes" id="UP000007726">
    <property type="component" value="Chromosome"/>
</dbReference>
<dbReference type="GO" id="GO:0005737">
    <property type="term" value="C:cytoplasm"/>
    <property type="evidence" value="ECO:0007669"/>
    <property type="project" value="UniProtKB-SubCell"/>
</dbReference>
<dbReference type="GO" id="GO:0005525">
    <property type="term" value="F:GTP binding"/>
    <property type="evidence" value="ECO:0007669"/>
    <property type="project" value="UniProtKB-UniRule"/>
</dbReference>
<dbReference type="GO" id="GO:0003924">
    <property type="term" value="F:GTPase activity"/>
    <property type="evidence" value="ECO:0007669"/>
    <property type="project" value="UniProtKB-UniRule"/>
</dbReference>
<dbReference type="GO" id="GO:0000287">
    <property type="term" value="F:magnesium ion binding"/>
    <property type="evidence" value="ECO:0007669"/>
    <property type="project" value="InterPro"/>
</dbReference>
<dbReference type="GO" id="GO:0042254">
    <property type="term" value="P:ribosome biogenesis"/>
    <property type="evidence" value="ECO:0007669"/>
    <property type="project" value="UniProtKB-UniRule"/>
</dbReference>
<dbReference type="CDD" id="cd01898">
    <property type="entry name" value="Obg"/>
    <property type="match status" value="1"/>
</dbReference>
<dbReference type="FunFam" id="2.70.210.12:FF:000001">
    <property type="entry name" value="GTPase Obg"/>
    <property type="match status" value="1"/>
</dbReference>
<dbReference type="Gene3D" id="3.30.300.350">
    <property type="entry name" value="GTP-binding protein OBG, C-terminal domain"/>
    <property type="match status" value="1"/>
</dbReference>
<dbReference type="Gene3D" id="2.70.210.12">
    <property type="entry name" value="GTP1/OBG domain"/>
    <property type="match status" value="1"/>
</dbReference>
<dbReference type="Gene3D" id="3.40.50.300">
    <property type="entry name" value="P-loop containing nucleotide triphosphate hydrolases"/>
    <property type="match status" value="1"/>
</dbReference>
<dbReference type="HAMAP" id="MF_01454">
    <property type="entry name" value="GTPase_Obg"/>
    <property type="match status" value="1"/>
</dbReference>
<dbReference type="InterPro" id="IPR031167">
    <property type="entry name" value="G_OBG"/>
</dbReference>
<dbReference type="InterPro" id="IPR006073">
    <property type="entry name" value="GTP-bd"/>
</dbReference>
<dbReference type="InterPro" id="IPR014100">
    <property type="entry name" value="GTP-bd_Obg/CgtA"/>
</dbReference>
<dbReference type="InterPro" id="IPR036346">
    <property type="entry name" value="GTP-bd_prot_GTP1/OBG_C_sf"/>
</dbReference>
<dbReference type="InterPro" id="IPR006074">
    <property type="entry name" value="GTP1-OBG_CS"/>
</dbReference>
<dbReference type="InterPro" id="IPR006169">
    <property type="entry name" value="GTP1_OBG_dom"/>
</dbReference>
<dbReference type="InterPro" id="IPR036726">
    <property type="entry name" value="GTP1_OBG_dom_sf"/>
</dbReference>
<dbReference type="InterPro" id="IPR045086">
    <property type="entry name" value="OBG_GTPase"/>
</dbReference>
<dbReference type="InterPro" id="IPR015349">
    <property type="entry name" value="OCT_dom"/>
</dbReference>
<dbReference type="InterPro" id="IPR027417">
    <property type="entry name" value="P-loop_NTPase"/>
</dbReference>
<dbReference type="InterPro" id="IPR005225">
    <property type="entry name" value="Small_GTP-bd"/>
</dbReference>
<dbReference type="NCBIfam" id="TIGR02729">
    <property type="entry name" value="Obg_CgtA"/>
    <property type="match status" value="1"/>
</dbReference>
<dbReference type="NCBIfam" id="TIGR03595">
    <property type="entry name" value="Obg_CgtA_exten"/>
    <property type="match status" value="1"/>
</dbReference>
<dbReference type="NCBIfam" id="NF008954">
    <property type="entry name" value="PRK12296.1"/>
    <property type="match status" value="1"/>
</dbReference>
<dbReference type="NCBIfam" id="NF008955">
    <property type="entry name" value="PRK12297.1"/>
    <property type="match status" value="1"/>
</dbReference>
<dbReference type="NCBIfam" id="NF008956">
    <property type="entry name" value="PRK12299.1"/>
    <property type="match status" value="1"/>
</dbReference>
<dbReference type="NCBIfam" id="TIGR00231">
    <property type="entry name" value="small_GTP"/>
    <property type="match status" value="1"/>
</dbReference>
<dbReference type="PANTHER" id="PTHR11702">
    <property type="entry name" value="DEVELOPMENTALLY REGULATED GTP-BINDING PROTEIN-RELATED"/>
    <property type="match status" value="1"/>
</dbReference>
<dbReference type="PANTHER" id="PTHR11702:SF31">
    <property type="entry name" value="MITOCHONDRIAL RIBOSOME-ASSOCIATED GTPASE 2"/>
    <property type="match status" value="1"/>
</dbReference>
<dbReference type="Pfam" id="PF09269">
    <property type="entry name" value="DUF1967"/>
    <property type="match status" value="1"/>
</dbReference>
<dbReference type="Pfam" id="PF01018">
    <property type="entry name" value="GTP1_OBG"/>
    <property type="match status" value="1"/>
</dbReference>
<dbReference type="Pfam" id="PF01926">
    <property type="entry name" value="MMR_HSR1"/>
    <property type="match status" value="1"/>
</dbReference>
<dbReference type="PRINTS" id="PR00326">
    <property type="entry name" value="GTP1OBG"/>
</dbReference>
<dbReference type="SUPFAM" id="SSF102741">
    <property type="entry name" value="Obg GTP-binding protein C-terminal domain"/>
    <property type="match status" value="1"/>
</dbReference>
<dbReference type="SUPFAM" id="SSF82051">
    <property type="entry name" value="Obg GTP-binding protein N-terminal domain"/>
    <property type="match status" value="1"/>
</dbReference>
<dbReference type="SUPFAM" id="SSF52540">
    <property type="entry name" value="P-loop containing nucleoside triphosphate hydrolases"/>
    <property type="match status" value="1"/>
</dbReference>
<dbReference type="PROSITE" id="PS51710">
    <property type="entry name" value="G_OBG"/>
    <property type="match status" value="1"/>
</dbReference>
<dbReference type="PROSITE" id="PS00905">
    <property type="entry name" value="GTP1_OBG"/>
    <property type="match status" value="1"/>
</dbReference>
<dbReference type="PROSITE" id="PS51883">
    <property type="entry name" value="OBG"/>
    <property type="match status" value="1"/>
</dbReference>
<dbReference type="PROSITE" id="PS51881">
    <property type="entry name" value="OCT"/>
    <property type="match status" value="1"/>
</dbReference>
<proteinExistence type="inferred from homology"/>
<protein>
    <recommendedName>
        <fullName evidence="1">GTPase Obg</fullName>
        <ecNumber evidence="1">3.6.5.-</ecNumber>
    </recommendedName>
    <alternativeName>
        <fullName evidence="1">GTP-binding protein Obg</fullName>
    </alternativeName>
</protein>
<comment type="function">
    <text evidence="1">An essential GTPase which binds GTP, GDP and possibly (p)ppGpp with moderate affinity, with high nucleotide exchange rates and a fairly low GTP hydrolysis rate. Plays a role in control of the cell cycle, stress response, ribosome biogenesis and in those bacteria that undergo differentiation, in morphogenesis control.</text>
</comment>
<comment type="cofactor">
    <cofactor evidence="1">
        <name>Mg(2+)</name>
        <dbReference type="ChEBI" id="CHEBI:18420"/>
    </cofactor>
</comment>
<comment type="subunit">
    <text evidence="1">Monomer.</text>
</comment>
<comment type="subcellular location">
    <subcellularLocation>
        <location evidence="1">Cytoplasm</location>
    </subcellularLocation>
</comment>
<comment type="similarity">
    <text evidence="1">Belongs to the TRAFAC class OBG-HflX-like GTPase superfamily. OBG GTPase family.</text>
</comment>
<sequence length="424" mass="46508">MFYDQAKIYVKGGDGGAGAVAFRREKYVPEGGPSGGDGGRGGKVIFIADEGLRTLVDFRYKRHYKADRGEHGQGKNMHGKSGEDMSVRIPVGTVVKDADTGEILADLIEHGQKVVVANGGRGGRGNARFMSNTNKAPTVAENGEPGEERNLLLELKLLADVGLVGFPNVGKSTIISRISAAKPKIADYHFTTLVPNLGVVELEDGESFVVADIPGLIEGAHTGAGLGHEFLRHTERTRLILHVLDIAGSEERDPLEDFQIIAEELRQYSQELANRPILIVANKMDIPGAEENLQRLTEKLGEDYRIFPVSAATGEGLKELVYAAAKALPEIPAPQIFVRDEEQHKLTQASAPHRFELTREGDFFVVSGKEVEKHVQMTMFDREDGLYRFQNILKAMGIERALLDEGIKVGDKVRIAGIEFEWEE</sequence>
<accession>B8FUR9</accession>
<feature type="chain" id="PRO_0000385882" description="GTPase Obg">
    <location>
        <begin position="1"/>
        <end position="424"/>
    </location>
</feature>
<feature type="domain" description="Obg" evidence="3">
    <location>
        <begin position="1"/>
        <end position="158"/>
    </location>
</feature>
<feature type="domain" description="OBG-type G" evidence="1">
    <location>
        <begin position="159"/>
        <end position="329"/>
    </location>
</feature>
<feature type="domain" description="OCT" evidence="2">
    <location>
        <begin position="347"/>
        <end position="424"/>
    </location>
</feature>
<feature type="binding site" evidence="1">
    <location>
        <begin position="165"/>
        <end position="172"/>
    </location>
    <ligand>
        <name>GTP</name>
        <dbReference type="ChEBI" id="CHEBI:37565"/>
    </ligand>
</feature>
<feature type="binding site" evidence="1">
    <location>
        <position position="172"/>
    </location>
    <ligand>
        <name>Mg(2+)</name>
        <dbReference type="ChEBI" id="CHEBI:18420"/>
    </ligand>
</feature>
<feature type="binding site" evidence="1">
    <location>
        <begin position="190"/>
        <end position="194"/>
    </location>
    <ligand>
        <name>GTP</name>
        <dbReference type="ChEBI" id="CHEBI:37565"/>
    </ligand>
</feature>
<feature type="binding site" evidence="1">
    <location>
        <position position="192"/>
    </location>
    <ligand>
        <name>Mg(2+)</name>
        <dbReference type="ChEBI" id="CHEBI:18420"/>
    </ligand>
</feature>
<feature type="binding site" evidence="1">
    <location>
        <begin position="212"/>
        <end position="215"/>
    </location>
    <ligand>
        <name>GTP</name>
        <dbReference type="ChEBI" id="CHEBI:37565"/>
    </ligand>
</feature>
<feature type="binding site" evidence="1">
    <location>
        <begin position="282"/>
        <end position="285"/>
    </location>
    <ligand>
        <name>GTP</name>
        <dbReference type="ChEBI" id="CHEBI:37565"/>
    </ligand>
</feature>
<feature type="binding site" evidence="1">
    <location>
        <begin position="310"/>
        <end position="312"/>
    </location>
    <ligand>
        <name>GTP</name>
        <dbReference type="ChEBI" id="CHEBI:37565"/>
    </ligand>
</feature>